<evidence type="ECO:0000255" key="1"/>
<gene>
    <name type="ORF">IIV6-373L</name>
</gene>
<protein>
    <recommendedName>
        <fullName>Uncharacterized protein 373L</fullName>
    </recommendedName>
</protein>
<organismHost>
    <name type="scientific">Acheta domesticus</name>
    <name type="common">House cricket</name>
    <dbReference type="NCBI Taxonomy" id="6997"/>
</organismHost>
<organismHost>
    <name type="scientific">Chilo suppressalis</name>
    <name type="common">Asiatic rice borer moth</name>
    <dbReference type="NCBI Taxonomy" id="168631"/>
</organismHost>
<organismHost>
    <name type="scientific">Gryllus bimaculatus</name>
    <name type="common">Two-spotted cricket</name>
    <dbReference type="NCBI Taxonomy" id="6999"/>
</organismHost>
<organismHost>
    <name type="scientific">Gryllus campestris</name>
    <dbReference type="NCBI Taxonomy" id="58607"/>
</organismHost>
<organismHost>
    <name type="scientific">Spodoptera frugiperda</name>
    <name type="common">Fall armyworm</name>
    <dbReference type="NCBI Taxonomy" id="7108"/>
</organismHost>
<reference key="1">
    <citation type="journal article" date="2001" name="Virology">
        <title>Analysis of the first complete DNA sequence of an invertebrate iridovirus: coding strategy of the genome of Chilo iridescent virus.</title>
        <authorList>
            <person name="Jakob N.J."/>
            <person name="Mueller K."/>
            <person name="Bahr U."/>
            <person name="Darai G."/>
        </authorList>
    </citation>
    <scope>NUCLEOTIDE SEQUENCE [LARGE SCALE GENOMIC DNA]</scope>
</reference>
<reference key="2">
    <citation type="journal article" date="2007" name="Virol. J.">
        <title>Comparative genomic analysis of the family Iridoviridae: re-annotating and defining the core set of iridovirus genes.</title>
        <authorList>
            <person name="Eaton H.E."/>
            <person name="Metcalf J."/>
            <person name="Penny E."/>
            <person name="Tcherepanov V."/>
            <person name="Upton C."/>
            <person name="Brunetti C.R."/>
        </authorList>
    </citation>
    <scope>GENOME REANNOTATION</scope>
</reference>
<name>373L_IIV6</name>
<proteinExistence type="predicted"/>
<keyword id="KW-1185">Reference proteome</keyword>
<sequence>MIEIIISTIFILYILLTKYKYETLKVIRTLMKNYKEIPLQNITLSENNEVTVEDKRIKIVTITIHGNKHMVKYKFNNKLFTALLPCTESEYQFHITTKNGIDVTENVIKFMGPNYDFYGVKIKVNEIGYDSLMFHRPGKEPTILKSDDYLPNNLSDYQWDFSLVGLNQNISPPPVGEETASNTVEENTMENILKETKNLSQNILIQKKTSISGYKTLDVKRKFVKRKFVKRINLNYSFLILLN</sequence>
<feature type="chain" id="PRO_0000377872" description="Uncharacterized protein 373L">
    <location>
        <begin position="1"/>
        <end position="243"/>
    </location>
</feature>
<feature type="short sequence motif" description="Bipartite nuclear localization signal" evidence="1">
    <location>
        <begin position="207"/>
        <end position="224"/>
    </location>
</feature>
<dbReference type="EMBL" id="AF303741">
    <property type="protein sequence ID" value="AAK82233.1"/>
    <property type="molecule type" value="Genomic_DNA"/>
</dbReference>
<dbReference type="RefSeq" id="NP_149836.1">
    <property type="nucleotide sequence ID" value="NC_003038.1"/>
</dbReference>
<dbReference type="KEGG" id="vg:1733201"/>
<dbReference type="OrthoDB" id="36254at10239"/>
<dbReference type="Proteomes" id="UP000001359">
    <property type="component" value="Genome"/>
</dbReference>
<dbReference type="InterPro" id="IPR043921">
    <property type="entry name" value="DUF5772"/>
</dbReference>
<dbReference type="Pfam" id="PF19080">
    <property type="entry name" value="DUF5772"/>
    <property type="match status" value="1"/>
</dbReference>
<organism>
    <name type="scientific">Invertebrate iridescent virus 6</name>
    <name type="common">IIV-6</name>
    <name type="synonym">Chilo iridescent virus</name>
    <dbReference type="NCBI Taxonomy" id="176652"/>
    <lineage>
        <taxon>Viruses</taxon>
        <taxon>Varidnaviria</taxon>
        <taxon>Bamfordvirae</taxon>
        <taxon>Nucleocytoviricota</taxon>
        <taxon>Megaviricetes</taxon>
        <taxon>Pimascovirales</taxon>
        <taxon>Iridoviridae</taxon>
        <taxon>Betairidovirinae</taxon>
        <taxon>Iridovirus</taxon>
    </lineage>
</organism>
<accession>Q91FF1</accession>